<geneLocation type="mitochondrion"/>
<gene>
    <name type="primary">MT-CYB</name>
    <name type="synonym">COB</name>
    <name type="synonym">CYTB</name>
    <name type="synonym">MTCYB</name>
</gene>
<comment type="function">
    <text evidence="2">Component of the ubiquinol-cytochrome c reductase complex (complex III or cytochrome b-c1 complex) that is part of the mitochondrial respiratory chain. The b-c1 complex mediates electron transfer from ubiquinol to cytochrome c. Contributes to the generation of a proton gradient across the mitochondrial membrane that is then used for ATP synthesis.</text>
</comment>
<comment type="cofactor">
    <cofactor evidence="2">
        <name>heme b</name>
        <dbReference type="ChEBI" id="CHEBI:60344"/>
    </cofactor>
    <text evidence="2">Binds 2 heme b groups non-covalently.</text>
</comment>
<comment type="subunit">
    <text evidence="2">The cytochrome bc1 complex contains 11 subunits: 3 respiratory subunits (MT-CYB, CYC1 and UQCRFS1), 2 core proteins (UQCRC1 and UQCRC2) and 6 low-molecular weight proteins (UQCRH/QCR6, UQCRB/QCR7, UQCRQ/QCR8, UQCR10/QCR9, UQCR11/QCR10 and a cleavage product of UQCRFS1). This cytochrome bc1 complex then forms a dimer.</text>
</comment>
<comment type="subcellular location">
    <subcellularLocation>
        <location evidence="2">Mitochondrion inner membrane</location>
        <topology evidence="2">Multi-pass membrane protein</topology>
    </subcellularLocation>
</comment>
<comment type="miscellaneous">
    <text evidence="1">Heme 1 (or BL or b562) is low-potential and absorbs at about 562 nm, and heme 2 (or BH or b566) is high-potential and absorbs at about 566 nm.</text>
</comment>
<comment type="similarity">
    <text evidence="3 4">Belongs to the cytochrome b family.</text>
</comment>
<comment type="caution">
    <text evidence="2">The full-length protein contains only eight transmembrane helices, not nine as predicted by bioinformatics tools.</text>
</comment>
<keyword id="KW-0249">Electron transport</keyword>
<keyword id="KW-0349">Heme</keyword>
<keyword id="KW-0408">Iron</keyword>
<keyword id="KW-0472">Membrane</keyword>
<keyword id="KW-0479">Metal-binding</keyword>
<keyword id="KW-0496">Mitochondrion</keyword>
<keyword id="KW-0999">Mitochondrion inner membrane</keyword>
<keyword id="KW-0679">Respiratory chain</keyword>
<keyword id="KW-0812">Transmembrane</keyword>
<keyword id="KW-1133">Transmembrane helix</keyword>
<keyword id="KW-0813">Transport</keyword>
<keyword id="KW-0830">Ubiquinone</keyword>
<dbReference type="EMBL" id="AY033086">
    <property type="protein sequence ID" value="AAK54452.1"/>
    <property type="molecule type" value="Genomic_DNA"/>
</dbReference>
<dbReference type="EMBL" id="AF348081">
    <property type="protein sequence ID" value="AAK71092.1"/>
    <property type="molecule type" value="Genomic_DNA"/>
</dbReference>
<dbReference type="RefSeq" id="NP_149956.1">
    <property type="nucleotide sequence ID" value="NC_003040.1"/>
</dbReference>
<dbReference type="SMR" id="Q94QQ7"/>
<dbReference type="GeneID" id="803551"/>
<dbReference type="CTD" id="4519"/>
<dbReference type="GO" id="GO:0005743">
    <property type="term" value="C:mitochondrial inner membrane"/>
    <property type="evidence" value="ECO:0007669"/>
    <property type="project" value="UniProtKB-SubCell"/>
</dbReference>
<dbReference type="GO" id="GO:0045275">
    <property type="term" value="C:respiratory chain complex III"/>
    <property type="evidence" value="ECO:0007669"/>
    <property type="project" value="InterPro"/>
</dbReference>
<dbReference type="GO" id="GO:0046872">
    <property type="term" value="F:metal ion binding"/>
    <property type="evidence" value="ECO:0007669"/>
    <property type="project" value="UniProtKB-KW"/>
</dbReference>
<dbReference type="GO" id="GO:0008121">
    <property type="term" value="F:ubiquinol-cytochrome-c reductase activity"/>
    <property type="evidence" value="ECO:0007669"/>
    <property type="project" value="InterPro"/>
</dbReference>
<dbReference type="GO" id="GO:0006122">
    <property type="term" value="P:mitochondrial electron transport, ubiquinol to cytochrome c"/>
    <property type="evidence" value="ECO:0007669"/>
    <property type="project" value="TreeGrafter"/>
</dbReference>
<dbReference type="CDD" id="cd00290">
    <property type="entry name" value="cytochrome_b_C"/>
    <property type="match status" value="1"/>
</dbReference>
<dbReference type="CDD" id="cd00284">
    <property type="entry name" value="Cytochrome_b_N"/>
    <property type="match status" value="1"/>
</dbReference>
<dbReference type="FunFam" id="1.20.810.10:FF:000002">
    <property type="entry name" value="Cytochrome b"/>
    <property type="match status" value="1"/>
</dbReference>
<dbReference type="Gene3D" id="1.20.810.10">
    <property type="entry name" value="Cytochrome Bc1 Complex, Chain C"/>
    <property type="match status" value="1"/>
</dbReference>
<dbReference type="InterPro" id="IPR005798">
    <property type="entry name" value="Cyt_b/b6_C"/>
</dbReference>
<dbReference type="InterPro" id="IPR036150">
    <property type="entry name" value="Cyt_b/b6_C_sf"/>
</dbReference>
<dbReference type="InterPro" id="IPR005797">
    <property type="entry name" value="Cyt_b/b6_N"/>
</dbReference>
<dbReference type="InterPro" id="IPR027387">
    <property type="entry name" value="Cytb/b6-like_sf"/>
</dbReference>
<dbReference type="InterPro" id="IPR030689">
    <property type="entry name" value="Cytochrome_b"/>
</dbReference>
<dbReference type="InterPro" id="IPR048260">
    <property type="entry name" value="Cytochrome_b_C_euk/bac"/>
</dbReference>
<dbReference type="InterPro" id="IPR048259">
    <property type="entry name" value="Cytochrome_b_N_euk/bac"/>
</dbReference>
<dbReference type="InterPro" id="IPR016174">
    <property type="entry name" value="Di-haem_cyt_TM"/>
</dbReference>
<dbReference type="PANTHER" id="PTHR19271">
    <property type="entry name" value="CYTOCHROME B"/>
    <property type="match status" value="1"/>
</dbReference>
<dbReference type="PANTHER" id="PTHR19271:SF16">
    <property type="entry name" value="CYTOCHROME B"/>
    <property type="match status" value="1"/>
</dbReference>
<dbReference type="Pfam" id="PF00032">
    <property type="entry name" value="Cytochrom_B_C"/>
    <property type="match status" value="1"/>
</dbReference>
<dbReference type="Pfam" id="PF00033">
    <property type="entry name" value="Cytochrome_B"/>
    <property type="match status" value="1"/>
</dbReference>
<dbReference type="PIRSF" id="PIRSF038885">
    <property type="entry name" value="COB"/>
    <property type="match status" value="1"/>
</dbReference>
<dbReference type="SUPFAM" id="SSF81648">
    <property type="entry name" value="a domain/subunit of cytochrome bc1 complex (Ubiquinol-cytochrome c reductase)"/>
    <property type="match status" value="1"/>
</dbReference>
<dbReference type="SUPFAM" id="SSF81342">
    <property type="entry name" value="Transmembrane di-heme cytochromes"/>
    <property type="match status" value="1"/>
</dbReference>
<dbReference type="PROSITE" id="PS51003">
    <property type="entry name" value="CYTB_CTER"/>
    <property type="match status" value="1"/>
</dbReference>
<dbReference type="PROSITE" id="PS51002">
    <property type="entry name" value="CYTB_NTER"/>
    <property type="match status" value="1"/>
</dbReference>
<protein>
    <recommendedName>
        <fullName>Cytochrome b</fullName>
    </recommendedName>
    <alternativeName>
        <fullName>Complex III subunit 3</fullName>
    </alternativeName>
    <alternativeName>
        <fullName>Complex III subunit III</fullName>
    </alternativeName>
    <alternativeName>
        <fullName>Cytochrome b-c1 complex subunit 3</fullName>
    </alternativeName>
    <alternativeName>
        <fullName>Ubiquinol-cytochrome-c reductase complex cytochrome b subunit</fullName>
    </alternativeName>
</protein>
<accession>Q94QQ7</accession>
<accession>Q953I2</accession>
<feature type="chain" id="PRO_0000061558" description="Cytochrome b">
    <location>
        <begin position="1"/>
        <end position="379"/>
    </location>
</feature>
<feature type="transmembrane region" description="Helical" evidence="2">
    <location>
        <begin position="33"/>
        <end position="53"/>
    </location>
</feature>
<feature type="transmembrane region" description="Helical" evidence="2">
    <location>
        <begin position="77"/>
        <end position="98"/>
    </location>
</feature>
<feature type="transmembrane region" description="Helical" evidence="2">
    <location>
        <begin position="113"/>
        <end position="133"/>
    </location>
</feature>
<feature type="transmembrane region" description="Helical" evidence="2">
    <location>
        <begin position="178"/>
        <end position="198"/>
    </location>
</feature>
<feature type="transmembrane region" description="Helical" evidence="2">
    <location>
        <begin position="226"/>
        <end position="246"/>
    </location>
</feature>
<feature type="transmembrane region" description="Helical" evidence="2">
    <location>
        <begin position="288"/>
        <end position="308"/>
    </location>
</feature>
<feature type="transmembrane region" description="Helical" evidence="2">
    <location>
        <begin position="320"/>
        <end position="340"/>
    </location>
</feature>
<feature type="transmembrane region" description="Helical" evidence="2">
    <location>
        <begin position="347"/>
        <end position="367"/>
    </location>
</feature>
<feature type="binding site" description="axial binding residue" evidence="2">
    <location>
        <position position="83"/>
    </location>
    <ligand>
        <name>heme b</name>
        <dbReference type="ChEBI" id="CHEBI:60344"/>
        <label>b562</label>
    </ligand>
    <ligandPart>
        <name>Fe</name>
        <dbReference type="ChEBI" id="CHEBI:18248"/>
    </ligandPart>
</feature>
<feature type="binding site" description="axial binding residue" evidence="2">
    <location>
        <position position="97"/>
    </location>
    <ligand>
        <name>heme b</name>
        <dbReference type="ChEBI" id="CHEBI:60344"/>
        <label>b566</label>
    </ligand>
    <ligandPart>
        <name>Fe</name>
        <dbReference type="ChEBI" id="CHEBI:18248"/>
    </ligandPart>
</feature>
<feature type="binding site" description="axial binding residue" evidence="2">
    <location>
        <position position="182"/>
    </location>
    <ligand>
        <name>heme b</name>
        <dbReference type="ChEBI" id="CHEBI:60344"/>
        <label>b562</label>
    </ligand>
    <ligandPart>
        <name>Fe</name>
        <dbReference type="ChEBI" id="CHEBI:18248"/>
    </ligandPart>
</feature>
<feature type="binding site" description="axial binding residue" evidence="2">
    <location>
        <position position="196"/>
    </location>
    <ligand>
        <name>heme b</name>
        <dbReference type="ChEBI" id="CHEBI:60344"/>
        <label>b566</label>
    </ligand>
    <ligandPart>
        <name>Fe</name>
        <dbReference type="ChEBI" id="CHEBI:18248"/>
    </ligandPart>
</feature>
<feature type="binding site" evidence="2">
    <location>
        <position position="201"/>
    </location>
    <ligand>
        <name>a ubiquinone</name>
        <dbReference type="ChEBI" id="CHEBI:16389"/>
    </ligand>
</feature>
<feature type="sequence conflict" description="In Ref. 1; AAK54452." evidence="5" ref="1">
    <original>V</original>
    <variation>A</variation>
    <location>
        <position position="238"/>
    </location>
</feature>
<sequence>MTNLRKTHPLMKIINSSFIDLPAPSNISSWWNFGSLLGICLIIQILTGLFLAMHYTSDTLTAFSSVTHICRDVNYGWLIRYMHANGASMFFICLFLHVGRGLYYGSYMFLETWNIGVLLLFAVMATAFMGYVLPWGQMSFWGATVITNLLSAIPYIGSDLVEWIWGGFSVDKATLTRFFAFHFILPFIIAAMAGVHLLFLHETGSNNPSGLCSDADKIPFHPYYTIKDILGVLLLILVLTTLVLFSPDLLGDPDNYTPANPLNTPPHIKPEWYFLFAYAILRSIPNKLGGVLALVLSILILAIVPLLHTSKQRSMMFRPFSQCLFWILVADLITLTWIGGQPVEHPFIIIGQLASILYFLLILVLMPITSILENNLLKW</sequence>
<organism>
    <name type="scientific">Pseudosoriculus fumidus</name>
    <name type="common">Taiwanese brown-toothed shrew</name>
    <name type="synonym">Episoriculus fumidus</name>
    <dbReference type="NCBI Taxonomy" id="3371150"/>
    <lineage>
        <taxon>Eukaryota</taxon>
        <taxon>Metazoa</taxon>
        <taxon>Chordata</taxon>
        <taxon>Craniata</taxon>
        <taxon>Vertebrata</taxon>
        <taxon>Euteleostomi</taxon>
        <taxon>Mammalia</taxon>
        <taxon>Eutheria</taxon>
        <taxon>Laurasiatheria</taxon>
        <taxon>Eulipotyphla</taxon>
        <taxon>Soricidae</taxon>
        <taxon>Pseudosoriculus</taxon>
    </lineage>
</organism>
<evidence type="ECO:0000250" key="1"/>
<evidence type="ECO:0000250" key="2">
    <source>
        <dbReference type="UniProtKB" id="P00157"/>
    </source>
</evidence>
<evidence type="ECO:0000255" key="3">
    <source>
        <dbReference type="PROSITE-ProRule" id="PRU00967"/>
    </source>
</evidence>
<evidence type="ECO:0000255" key="4">
    <source>
        <dbReference type="PROSITE-ProRule" id="PRU00968"/>
    </source>
</evidence>
<evidence type="ECO:0000305" key="5"/>
<name>CYB_PSEFG</name>
<reference key="1">
    <citation type="thesis" date="2001" institute="National Taiwan University" country="Taiwan">
        <title>Mitochondrial cytochrome b sequence of Soriculus fumidus.</title>
        <authorList>
            <person name="Fang Y.P."/>
        </authorList>
    </citation>
    <scope>NUCLEOTIDE SEQUENCE [GENOMIC DNA]</scope>
    <source>
        <strain>Isolate 1998/5/25</strain>
        <tissue>Muscle</tissue>
    </source>
</reference>
<reference key="2">
    <citation type="submission" date="2001-02" db="EMBL/GenBank/DDBJ databases">
        <authorList>
            <person name="Lin Y.-H."/>
        </authorList>
    </citation>
    <scope>NUCLEOTIDE SEQUENCE [GENOMIC DNA]</scope>
</reference>
<proteinExistence type="inferred from homology"/>